<keyword id="KW-0378">Hydrolase</keyword>
<keyword id="KW-0460">Magnesium</keyword>
<organism>
    <name type="scientific">Bacillus thuringiensis (strain Al Hakam)</name>
    <dbReference type="NCBI Taxonomy" id="412694"/>
    <lineage>
        <taxon>Bacteria</taxon>
        <taxon>Bacillati</taxon>
        <taxon>Bacillota</taxon>
        <taxon>Bacilli</taxon>
        <taxon>Bacillales</taxon>
        <taxon>Bacillaceae</taxon>
        <taxon>Bacillus</taxon>
        <taxon>Bacillus cereus group</taxon>
    </lineage>
</organism>
<reference key="1">
    <citation type="journal article" date="2007" name="J. Bacteriol.">
        <title>The complete genome sequence of Bacillus thuringiensis Al Hakam.</title>
        <authorList>
            <person name="Challacombe J.F."/>
            <person name="Altherr M.R."/>
            <person name="Xie G."/>
            <person name="Bhotika S.S."/>
            <person name="Brown N."/>
            <person name="Bruce D."/>
            <person name="Campbell C.S."/>
            <person name="Campbell M.L."/>
            <person name="Chen J."/>
            <person name="Chertkov O."/>
            <person name="Cleland C."/>
            <person name="Dimitrijevic M."/>
            <person name="Doggett N.A."/>
            <person name="Fawcett J.J."/>
            <person name="Glavina T."/>
            <person name="Goodwin L.A."/>
            <person name="Green L.D."/>
            <person name="Han C.S."/>
            <person name="Hill K.K."/>
            <person name="Hitchcock P."/>
            <person name="Jackson P.J."/>
            <person name="Keim P."/>
            <person name="Kewalramani A.R."/>
            <person name="Longmire J."/>
            <person name="Lucas S."/>
            <person name="Malfatti S."/>
            <person name="Martinez D."/>
            <person name="McMurry K."/>
            <person name="Meincke L.J."/>
            <person name="Misra M."/>
            <person name="Moseman B.L."/>
            <person name="Mundt M."/>
            <person name="Munk A.C."/>
            <person name="Okinaka R.T."/>
            <person name="Parson-Quintana B."/>
            <person name="Reilly L.P."/>
            <person name="Richardson P."/>
            <person name="Robinson D.L."/>
            <person name="Saunders E."/>
            <person name="Tapia R."/>
            <person name="Tesmer J.G."/>
            <person name="Thayer N."/>
            <person name="Thompson L.S."/>
            <person name="Tice H."/>
            <person name="Ticknor L.O."/>
            <person name="Wills P.L."/>
            <person name="Gilna P."/>
            <person name="Brettin T.S."/>
        </authorList>
    </citation>
    <scope>NUCLEOTIDE SEQUENCE [LARGE SCALE GENOMIC DNA]</scope>
    <source>
        <strain>Al Hakam</strain>
    </source>
</reference>
<comment type="function">
    <text evidence="1">Hydrolyzes pyrophosphate formed during P-Ser-HPr dephosphorylation by HPrK/P. Might play a role in controlling the intracellular pyrophosphate pool.</text>
</comment>
<comment type="catalytic activity">
    <reaction evidence="1">
        <text>diphosphate + H2O = 2 phosphate + H(+)</text>
        <dbReference type="Rhea" id="RHEA:24576"/>
        <dbReference type="ChEBI" id="CHEBI:15377"/>
        <dbReference type="ChEBI" id="CHEBI:15378"/>
        <dbReference type="ChEBI" id="CHEBI:33019"/>
        <dbReference type="ChEBI" id="CHEBI:43474"/>
        <dbReference type="EC" id="3.6.1.1"/>
    </reaction>
</comment>
<comment type="cofactor">
    <cofactor evidence="1">
        <name>Mg(2+)</name>
        <dbReference type="ChEBI" id="CHEBI:18420"/>
    </cofactor>
</comment>
<comment type="similarity">
    <text evidence="1">Belongs to the HAD-like hydrolase superfamily. PpaX family.</text>
</comment>
<name>PPAX_BACAH</name>
<accession>A0RKU8</accession>
<sequence>MKINTVLFDLDGTLINTNELIISSFLHTLHTYYPNQYKREDVLPFIGPSLHDTFSKIDESKVEELITSYRQFNHDHHDELVEEYETVYETVQELKKQGYKVGIVTTKARQTVEMGLKLSKLDEFFDVVVTIDDVEHVKPHPEPLQKALQLLDAKPEEALMVGDNHHDIVGGQNAGTKTAAVSWTLKGRAYLEAYKPDFMLDKMSDLLPILSDMNRS</sequence>
<proteinExistence type="inferred from homology"/>
<evidence type="ECO:0000255" key="1">
    <source>
        <dbReference type="HAMAP-Rule" id="MF_01250"/>
    </source>
</evidence>
<feature type="chain" id="PRO_1000067187" description="Pyrophosphatase PpaX">
    <location>
        <begin position="1"/>
        <end position="216"/>
    </location>
</feature>
<feature type="active site" description="Nucleophile" evidence="1">
    <location>
        <position position="9"/>
    </location>
</feature>
<gene>
    <name evidence="1" type="primary">ppaX</name>
    <name type="ordered locus">BALH_4653</name>
</gene>
<dbReference type="EC" id="3.6.1.1" evidence="1"/>
<dbReference type="EMBL" id="CP000485">
    <property type="protein sequence ID" value="ABK87841.1"/>
    <property type="molecule type" value="Genomic_DNA"/>
</dbReference>
<dbReference type="RefSeq" id="WP_000700956.1">
    <property type="nucleotide sequence ID" value="NC_008600.1"/>
</dbReference>
<dbReference type="SMR" id="A0RKU8"/>
<dbReference type="KEGG" id="btl:BALH_4653"/>
<dbReference type="HOGENOM" id="CLU_045011_19_3_9"/>
<dbReference type="GO" id="GO:0005829">
    <property type="term" value="C:cytosol"/>
    <property type="evidence" value="ECO:0007669"/>
    <property type="project" value="TreeGrafter"/>
</dbReference>
<dbReference type="GO" id="GO:0004427">
    <property type="term" value="F:inorganic diphosphate phosphatase activity"/>
    <property type="evidence" value="ECO:0007669"/>
    <property type="project" value="UniProtKB-UniRule"/>
</dbReference>
<dbReference type="GO" id="GO:0000287">
    <property type="term" value="F:magnesium ion binding"/>
    <property type="evidence" value="ECO:0007669"/>
    <property type="project" value="UniProtKB-UniRule"/>
</dbReference>
<dbReference type="GO" id="GO:0008967">
    <property type="term" value="F:phosphoglycolate phosphatase activity"/>
    <property type="evidence" value="ECO:0007669"/>
    <property type="project" value="TreeGrafter"/>
</dbReference>
<dbReference type="GO" id="GO:0006281">
    <property type="term" value="P:DNA repair"/>
    <property type="evidence" value="ECO:0007669"/>
    <property type="project" value="TreeGrafter"/>
</dbReference>
<dbReference type="CDD" id="cd02616">
    <property type="entry name" value="HAD_PPase"/>
    <property type="match status" value="1"/>
</dbReference>
<dbReference type="FunFam" id="3.40.50.1000:FF:000022">
    <property type="entry name" value="Phosphoglycolate phosphatase"/>
    <property type="match status" value="1"/>
</dbReference>
<dbReference type="FunFam" id="1.10.150.240:FF:000008">
    <property type="entry name" value="Pyrophosphatase PpaX"/>
    <property type="match status" value="1"/>
</dbReference>
<dbReference type="Gene3D" id="3.40.50.1000">
    <property type="entry name" value="HAD superfamily/HAD-like"/>
    <property type="match status" value="1"/>
</dbReference>
<dbReference type="Gene3D" id="1.10.150.240">
    <property type="entry name" value="Putative phosphatase, domain 2"/>
    <property type="match status" value="1"/>
</dbReference>
<dbReference type="HAMAP" id="MF_01250">
    <property type="entry name" value="Pyrophosphat_PpaX"/>
    <property type="match status" value="1"/>
</dbReference>
<dbReference type="InterPro" id="IPR050155">
    <property type="entry name" value="HAD-like_hydrolase_sf"/>
</dbReference>
<dbReference type="InterPro" id="IPR036412">
    <property type="entry name" value="HAD-like_sf"/>
</dbReference>
<dbReference type="InterPro" id="IPR006439">
    <property type="entry name" value="HAD-SF_hydro_IA"/>
</dbReference>
<dbReference type="InterPro" id="IPR006549">
    <property type="entry name" value="HAD-SF_hydro_IIIA"/>
</dbReference>
<dbReference type="InterPro" id="IPR041492">
    <property type="entry name" value="HAD_2"/>
</dbReference>
<dbReference type="InterPro" id="IPR023214">
    <property type="entry name" value="HAD_sf"/>
</dbReference>
<dbReference type="InterPro" id="IPR023198">
    <property type="entry name" value="PGP-like_dom2"/>
</dbReference>
<dbReference type="InterPro" id="IPR023733">
    <property type="entry name" value="Pyrophosphatase_Ppax"/>
</dbReference>
<dbReference type="NCBIfam" id="TIGR01549">
    <property type="entry name" value="HAD-SF-IA-v1"/>
    <property type="match status" value="1"/>
</dbReference>
<dbReference type="NCBIfam" id="TIGR01509">
    <property type="entry name" value="HAD-SF-IA-v3"/>
    <property type="match status" value="1"/>
</dbReference>
<dbReference type="NCBIfam" id="TIGR01662">
    <property type="entry name" value="HAD-SF-IIIA"/>
    <property type="match status" value="1"/>
</dbReference>
<dbReference type="NCBIfam" id="NF009804">
    <property type="entry name" value="PRK13288.1"/>
    <property type="match status" value="1"/>
</dbReference>
<dbReference type="PANTHER" id="PTHR43434">
    <property type="entry name" value="PHOSPHOGLYCOLATE PHOSPHATASE"/>
    <property type="match status" value="1"/>
</dbReference>
<dbReference type="PANTHER" id="PTHR43434:SF26">
    <property type="entry name" value="PYROPHOSPHATASE PPAX"/>
    <property type="match status" value="1"/>
</dbReference>
<dbReference type="Pfam" id="PF13419">
    <property type="entry name" value="HAD_2"/>
    <property type="match status" value="1"/>
</dbReference>
<dbReference type="PRINTS" id="PR00413">
    <property type="entry name" value="HADHALOGNASE"/>
</dbReference>
<dbReference type="SFLD" id="SFLDG01135">
    <property type="entry name" value="C1.5.6:_HAD__Beta-PGM__Phospha"/>
    <property type="match status" value="1"/>
</dbReference>
<dbReference type="SFLD" id="SFLDG01129">
    <property type="entry name" value="C1.5:_HAD__Beta-PGM__Phosphata"/>
    <property type="match status" value="1"/>
</dbReference>
<dbReference type="SUPFAM" id="SSF56784">
    <property type="entry name" value="HAD-like"/>
    <property type="match status" value="1"/>
</dbReference>
<protein>
    <recommendedName>
        <fullName evidence="1">Pyrophosphatase PpaX</fullName>
        <ecNumber evidence="1">3.6.1.1</ecNumber>
    </recommendedName>
</protein>